<name>RS17_ORITB</name>
<evidence type="ECO:0000255" key="1">
    <source>
        <dbReference type="HAMAP-Rule" id="MF_01345"/>
    </source>
</evidence>
<evidence type="ECO:0000305" key="2"/>
<organism>
    <name type="scientific">Orientia tsutsugamushi (strain Boryong)</name>
    <name type="common">Rickettsia tsutsugamushi</name>
    <dbReference type="NCBI Taxonomy" id="357244"/>
    <lineage>
        <taxon>Bacteria</taxon>
        <taxon>Pseudomonadati</taxon>
        <taxon>Pseudomonadota</taxon>
        <taxon>Alphaproteobacteria</taxon>
        <taxon>Rickettsiales</taxon>
        <taxon>Rickettsiaceae</taxon>
        <taxon>Rickettsieae</taxon>
        <taxon>Orientia</taxon>
    </lineage>
</organism>
<comment type="function">
    <text evidence="1">One of the primary rRNA binding proteins, it binds specifically to the 5'-end of 16S ribosomal RNA.</text>
</comment>
<comment type="subunit">
    <text evidence="1">Part of the 30S ribosomal subunit.</text>
</comment>
<comment type="similarity">
    <text evidence="1">Belongs to the universal ribosomal protein uS17 family.</text>
</comment>
<keyword id="KW-1185">Reference proteome</keyword>
<keyword id="KW-0687">Ribonucleoprotein</keyword>
<keyword id="KW-0689">Ribosomal protein</keyword>
<keyword id="KW-0694">RNA-binding</keyword>
<keyword id="KW-0699">rRNA-binding</keyword>
<reference key="1">
    <citation type="journal article" date="2007" name="Proc. Natl. Acad. Sci. U.S.A.">
        <title>The Orientia tsutsugamushi genome reveals massive proliferation of conjugative type IV secretion system and host-cell interaction genes.</title>
        <authorList>
            <person name="Cho N.-H."/>
            <person name="Kim H.-R."/>
            <person name="Lee J.-H."/>
            <person name="Kim S.-Y."/>
            <person name="Kim J."/>
            <person name="Cha S."/>
            <person name="Kim S.-Y."/>
            <person name="Darby A.C."/>
            <person name="Fuxelius H.-H."/>
            <person name="Yin J."/>
            <person name="Kim J.H."/>
            <person name="Kim J."/>
            <person name="Lee S.J."/>
            <person name="Koh Y.-S."/>
            <person name="Jang W.-J."/>
            <person name="Park K.-H."/>
            <person name="Andersson S.G.E."/>
            <person name="Choi M.-S."/>
            <person name="Kim I.-S."/>
        </authorList>
    </citation>
    <scope>NUCLEOTIDE SEQUENCE [LARGE SCALE GENOMIC DNA]</scope>
    <source>
        <strain>Boryong</strain>
    </source>
</reference>
<proteinExistence type="inferred from homology"/>
<dbReference type="EMBL" id="AM494475">
    <property type="protein sequence ID" value="CAM79433.1"/>
    <property type="molecule type" value="Genomic_DNA"/>
</dbReference>
<dbReference type="RefSeq" id="WP_011944431.1">
    <property type="nucleotide sequence ID" value="NC_009488.1"/>
</dbReference>
<dbReference type="SMR" id="A5CCK3"/>
<dbReference type="KEGG" id="ots:OTBS_0367"/>
<dbReference type="eggNOG" id="COG0186">
    <property type="taxonomic scope" value="Bacteria"/>
</dbReference>
<dbReference type="HOGENOM" id="CLU_073626_1_1_5"/>
<dbReference type="Proteomes" id="UP000001565">
    <property type="component" value="Chromosome"/>
</dbReference>
<dbReference type="GO" id="GO:0022627">
    <property type="term" value="C:cytosolic small ribosomal subunit"/>
    <property type="evidence" value="ECO:0007669"/>
    <property type="project" value="TreeGrafter"/>
</dbReference>
<dbReference type="GO" id="GO:0019843">
    <property type="term" value="F:rRNA binding"/>
    <property type="evidence" value="ECO:0007669"/>
    <property type="project" value="UniProtKB-UniRule"/>
</dbReference>
<dbReference type="GO" id="GO:0003735">
    <property type="term" value="F:structural constituent of ribosome"/>
    <property type="evidence" value="ECO:0007669"/>
    <property type="project" value="InterPro"/>
</dbReference>
<dbReference type="GO" id="GO:0006412">
    <property type="term" value="P:translation"/>
    <property type="evidence" value="ECO:0007669"/>
    <property type="project" value="UniProtKB-UniRule"/>
</dbReference>
<dbReference type="CDD" id="cd00364">
    <property type="entry name" value="Ribosomal_uS17"/>
    <property type="match status" value="1"/>
</dbReference>
<dbReference type="Gene3D" id="2.40.50.140">
    <property type="entry name" value="Nucleic acid-binding proteins"/>
    <property type="match status" value="1"/>
</dbReference>
<dbReference type="HAMAP" id="MF_01345_B">
    <property type="entry name" value="Ribosomal_uS17_B"/>
    <property type="match status" value="1"/>
</dbReference>
<dbReference type="InterPro" id="IPR012340">
    <property type="entry name" value="NA-bd_OB-fold"/>
</dbReference>
<dbReference type="InterPro" id="IPR000266">
    <property type="entry name" value="Ribosomal_uS17"/>
</dbReference>
<dbReference type="InterPro" id="IPR019984">
    <property type="entry name" value="Ribosomal_uS17_bact/chlr"/>
</dbReference>
<dbReference type="InterPro" id="IPR019979">
    <property type="entry name" value="Ribosomal_uS17_CS"/>
</dbReference>
<dbReference type="NCBIfam" id="NF004123">
    <property type="entry name" value="PRK05610.1"/>
    <property type="match status" value="1"/>
</dbReference>
<dbReference type="NCBIfam" id="TIGR03635">
    <property type="entry name" value="uS17_bact"/>
    <property type="match status" value="1"/>
</dbReference>
<dbReference type="PANTHER" id="PTHR10744">
    <property type="entry name" value="40S RIBOSOMAL PROTEIN S11 FAMILY MEMBER"/>
    <property type="match status" value="1"/>
</dbReference>
<dbReference type="PANTHER" id="PTHR10744:SF1">
    <property type="entry name" value="SMALL RIBOSOMAL SUBUNIT PROTEIN US17M"/>
    <property type="match status" value="1"/>
</dbReference>
<dbReference type="Pfam" id="PF00366">
    <property type="entry name" value="Ribosomal_S17"/>
    <property type="match status" value="1"/>
</dbReference>
<dbReference type="PRINTS" id="PR00973">
    <property type="entry name" value="RIBOSOMALS17"/>
</dbReference>
<dbReference type="SUPFAM" id="SSF50249">
    <property type="entry name" value="Nucleic acid-binding proteins"/>
    <property type="match status" value="1"/>
</dbReference>
<dbReference type="PROSITE" id="PS00056">
    <property type="entry name" value="RIBOSOMAL_S17"/>
    <property type="match status" value="1"/>
</dbReference>
<accession>A5CCK3</accession>
<protein>
    <recommendedName>
        <fullName evidence="1">Small ribosomal subunit protein uS17</fullName>
    </recommendedName>
    <alternativeName>
        <fullName evidence="2">30S ribosomal protein S17</fullName>
    </alternativeName>
</protein>
<feature type="chain" id="PRO_1000054987" description="Small ribosomal subunit protein uS17">
    <location>
        <begin position="1"/>
        <end position="79"/>
    </location>
</feature>
<sequence>MPRRVLQGQVISAKSDKTIIVSVERRFKHPMYHKTVKIAKKYAVHDPDNLYNQGDKVKIIESRPISKTKCWRVIEDKGQ</sequence>
<gene>
    <name evidence="1" type="primary">rpsQ</name>
    <name type="ordered locus">OTBS_0367</name>
</gene>